<reference key="1">
    <citation type="journal article" date="1997" name="Nature">
        <title>The complete genome sequence of the hyperthermophilic, sulphate-reducing archaeon Archaeoglobus fulgidus.</title>
        <authorList>
            <person name="Klenk H.-P."/>
            <person name="Clayton R.A."/>
            <person name="Tomb J.-F."/>
            <person name="White O."/>
            <person name="Nelson K.E."/>
            <person name="Ketchum K.A."/>
            <person name="Dodson R.J."/>
            <person name="Gwinn M.L."/>
            <person name="Hickey E.K."/>
            <person name="Peterson J.D."/>
            <person name="Richardson D.L."/>
            <person name="Kerlavage A.R."/>
            <person name="Graham D.E."/>
            <person name="Kyrpides N.C."/>
            <person name="Fleischmann R.D."/>
            <person name="Quackenbush J."/>
            <person name="Lee N.H."/>
            <person name="Sutton G.G."/>
            <person name="Gill S.R."/>
            <person name="Kirkness E.F."/>
            <person name="Dougherty B.A."/>
            <person name="McKenney K."/>
            <person name="Adams M.D."/>
            <person name="Loftus B.J."/>
            <person name="Peterson S.N."/>
            <person name="Reich C.I."/>
            <person name="McNeil L.K."/>
            <person name="Badger J.H."/>
            <person name="Glodek A."/>
            <person name="Zhou L."/>
            <person name="Overbeek R."/>
            <person name="Gocayne J.D."/>
            <person name="Weidman J.F."/>
            <person name="McDonald L.A."/>
            <person name="Utterback T.R."/>
            <person name="Cotton M.D."/>
            <person name="Spriggs T."/>
            <person name="Artiach P."/>
            <person name="Kaine B.P."/>
            <person name="Sykes S.M."/>
            <person name="Sadow P.W."/>
            <person name="D'Andrea K.P."/>
            <person name="Bowman C."/>
            <person name="Fujii C."/>
            <person name="Garland S.A."/>
            <person name="Mason T.M."/>
            <person name="Olsen G.J."/>
            <person name="Fraser C.M."/>
            <person name="Smith H.O."/>
            <person name="Woese C.R."/>
            <person name="Venter J.C."/>
        </authorList>
    </citation>
    <scope>NUCLEOTIDE SEQUENCE [LARGE SCALE GENOMIC DNA]</scope>
    <source>
        <strain>ATCC 49558 / DSM 4304 / JCM 9628 / NBRC 100126 / VC-16</strain>
    </source>
</reference>
<sequence>MSKVDYDSILKDFPFPPAVKEEIKAELEKHGLKKTEAKKVVEKCFQAYLANLMEPGEAAGIVAAQSIGEPGTQMTMRTFHYAGVAEINVTLGLPRLIEILDVRKNPSTPMMTIRLLPEYAKDREKAREVANRIEATYVKDVADIEVDIRRFTIIVKPDEKALERKGLTVEDLKSKIGKALKTEVEETEQGLAVQITEPSYKALMAAFDKLKDTVIMGLKEIKRVIIRKEEDEYVLYTEGSNLKKIMKVKGVDFTRTTTNNIYEIYEVLGIEAARNAIIREALDTLEEQGLEVDVRHIMLVADVMTADGELRQIGRHGVAGEKQSILARAAFEMTVNNLLDAAVRGEEDHLRGITENIIVGQPIKLGTGDVELVLKMGGKK</sequence>
<gene>
    <name evidence="1" type="primary">rpo1C</name>
    <name evidence="1" type="synonym">rpoA2</name>
    <name type="ordered locus">AF_1889</name>
</gene>
<comment type="function">
    <text evidence="1">DNA-dependent RNA polymerase (RNAP) catalyzes the transcription of DNA into RNA using the four ribonucleoside triphosphates as substrates. Forms part of the jaw domain.</text>
</comment>
<comment type="catalytic activity">
    <reaction evidence="1">
        <text>RNA(n) + a ribonucleoside 5'-triphosphate = RNA(n+1) + diphosphate</text>
        <dbReference type="Rhea" id="RHEA:21248"/>
        <dbReference type="Rhea" id="RHEA-COMP:14527"/>
        <dbReference type="Rhea" id="RHEA-COMP:17342"/>
        <dbReference type="ChEBI" id="CHEBI:33019"/>
        <dbReference type="ChEBI" id="CHEBI:61557"/>
        <dbReference type="ChEBI" id="CHEBI:140395"/>
        <dbReference type="EC" id="2.7.7.6"/>
    </reaction>
</comment>
<comment type="subunit">
    <text evidence="1">Part of the RNA polymerase complex.</text>
</comment>
<comment type="subcellular location">
    <subcellularLocation>
        <location evidence="1">Cytoplasm</location>
    </subcellularLocation>
</comment>
<comment type="similarity">
    <text evidence="1">Belongs to the RNA polymerase beta' chain family.</text>
</comment>
<protein>
    <recommendedName>
        <fullName evidence="1">DNA-directed RNA polymerase subunit Rpo1C</fullName>
        <ecNumber evidence="1">2.7.7.6</ecNumber>
    </recommendedName>
    <alternativeName>
        <fullName evidence="1">DNA-directed RNA polymerase subunit A''</fullName>
    </alternativeName>
</protein>
<proteinExistence type="inferred from homology"/>
<dbReference type="EC" id="2.7.7.6" evidence="1"/>
<dbReference type="EMBL" id="AE000782">
    <property type="protein sequence ID" value="AAB89364.1"/>
    <property type="molecule type" value="Genomic_DNA"/>
</dbReference>
<dbReference type="PIR" id="H69485">
    <property type="entry name" value="H69485"/>
</dbReference>
<dbReference type="RefSeq" id="WP_010879382.1">
    <property type="nucleotide sequence ID" value="NC_000917.1"/>
</dbReference>
<dbReference type="SMR" id="O28390"/>
<dbReference type="STRING" id="224325.AF_1889"/>
<dbReference type="PaxDb" id="224325-AF_1889"/>
<dbReference type="EnsemblBacteria" id="AAB89364">
    <property type="protein sequence ID" value="AAB89364"/>
    <property type="gene ID" value="AF_1889"/>
</dbReference>
<dbReference type="GeneID" id="24795633"/>
<dbReference type="KEGG" id="afu:AF_1889"/>
<dbReference type="eggNOG" id="arCOG04256">
    <property type="taxonomic scope" value="Archaea"/>
</dbReference>
<dbReference type="HOGENOM" id="CLU_037097_1_0_2"/>
<dbReference type="OrthoDB" id="372142at2157"/>
<dbReference type="PhylomeDB" id="O28390"/>
<dbReference type="Proteomes" id="UP000002199">
    <property type="component" value="Chromosome"/>
</dbReference>
<dbReference type="GO" id="GO:0005737">
    <property type="term" value="C:cytoplasm"/>
    <property type="evidence" value="ECO:0007669"/>
    <property type="project" value="UniProtKB-SubCell"/>
</dbReference>
<dbReference type="GO" id="GO:0000428">
    <property type="term" value="C:DNA-directed RNA polymerase complex"/>
    <property type="evidence" value="ECO:0007669"/>
    <property type="project" value="UniProtKB-KW"/>
</dbReference>
<dbReference type="GO" id="GO:0003677">
    <property type="term" value="F:DNA binding"/>
    <property type="evidence" value="ECO:0007669"/>
    <property type="project" value="UniProtKB-UniRule"/>
</dbReference>
<dbReference type="GO" id="GO:0003899">
    <property type="term" value="F:DNA-directed RNA polymerase activity"/>
    <property type="evidence" value="ECO:0007669"/>
    <property type="project" value="UniProtKB-UniRule"/>
</dbReference>
<dbReference type="GO" id="GO:0006351">
    <property type="term" value="P:DNA-templated transcription"/>
    <property type="evidence" value="ECO:0007669"/>
    <property type="project" value="UniProtKB-UniRule"/>
</dbReference>
<dbReference type="CDD" id="cd06528">
    <property type="entry name" value="RNAP_A"/>
    <property type="match status" value="1"/>
</dbReference>
<dbReference type="Gene3D" id="1.10.150.390">
    <property type="match status" value="1"/>
</dbReference>
<dbReference type="HAMAP" id="MF_00411">
    <property type="entry name" value="RNApol_arch_Rpo1C"/>
    <property type="match status" value="1"/>
</dbReference>
<dbReference type="InterPro" id="IPR045867">
    <property type="entry name" value="DNA-dir_RpoC_beta_prime"/>
</dbReference>
<dbReference type="InterPro" id="IPR007081">
    <property type="entry name" value="RNA_pol_Rpb1_5"/>
</dbReference>
<dbReference type="InterPro" id="IPR012757">
    <property type="entry name" value="RPO1C"/>
</dbReference>
<dbReference type="NCBIfam" id="TIGR02389">
    <property type="entry name" value="RNA_pol_rpoA2"/>
    <property type="match status" value="1"/>
</dbReference>
<dbReference type="PANTHER" id="PTHR19376">
    <property type="entry name" value="DNA-DIRECTED RNA POLYMERASE"/>
    <property type="match status" value="1"/>
</dbReference>
<dbReference type="PANTHER" id="PTHR19376:SF32">
    <property type="entry name" value="DNA-DIRECTED RNA POLYMERASE III SUBUNIT RPC1"/>
    <property type="match status" value="1"/>
</dbReference>
<dbReference type="Pfam" id="PF04998">
    <property type="entry name" value="RNA_pol_Rpb1_5"/>
    <property type="match status" value="1"/>
</dbReference>
<dbReference type="SUPFAM" id="SSF64484">
    <property type="entry name" value="beta and beta-prime subunits of DNA dependent RNA-polymerase"/>
    <property type="match status" value="1"/>
</dbReference>
<organism>
    <name type="scientific">Archaeoglobus fulgidus (strain ATCC 49558 / DSM 4304 / JCM 9628 / NBRC 100126 / VC-16)</name>
    <dbReference type="NCBI Taxonomy" id="224325"/>
    <lineage>
        <taxon>Archaea</taxon>
        <taxon>Methanobacteriati</taxon>
        <taxon>Methanobacteriota</taxon>
        <taxon>Archaeoglobi</taxon>
        <taxon>Archaeoglobales</taxon>
        <taxon>Archaeoglobaceae</taxon>
        <taxon>Archaeoglobus</taxon>
    </lineage>
</organism>
<keyword id="KW-0963">Cytoplasm</keyword>
<keyword id="KW-0238">DNA-binding</keyword>
<keyword id="KW-0240">DNA-directed RNA polymerase</keyword>
<keyword id="KW-0548">Nucleotidyltransferase</keyword>
<keyword id="KW-1185">Reference proteome</keyword>
<keyword id="KW-0804">Transcription</keyword>
<keyword id="KW-0808">Transferase</keyword>
<accession>O28390</accession>
<feature type="chain" id="PRO_0000074012" description="DNA-directed RNA polymerase subunit Rpo1C">
    <location>
        <begin position="1"/>
        <end position="380"/>
    </location>
</feature>
<name>RPO1C_ARCFU</name>
<evidence type="ECO:0000255" key="1">
    <source>
        <dbReference type="HAMAP-Rule" id="MF_00411"/>
    </source>
</evidence>